<sequence length="328" mass="35923">MNRKKIIVAAVIVALLATLAYGWHYYRQQNDASLTLYGNVDIRTVNLGFRVAGRLASLAVDEGDDIHPGQTLGKLDDGPYLNALKQAQANVQSAQAQLALLKAGYREEEIAQVRSEVAQRQAAFDYADNFLKRQQGLWASKAVSANELENARTARNQAQANLQAAKDKLAQFLSGNRPQEIAQAEANLAQTEAELAQAQLNLQDTILLAPSAGTVLTRAVEPGTILSASNTVFTVSLTDPVWVRAYVSERHLGQAIPGSEVEVFTDGRPDKPYHGKIGFVSPTAEFTPKTVETPDLRTDLVYRLRIIITDADESLRQGMPVTVRFPQR</sequence>
<feature type="signal peptide" evidence="1">
    <location>
        <begin position="1"/>
        <end position="22"/>
    </location>
</feature>
<feature type="chain" id="PRO_5000115508" description="UPF0194 membrane protein YPN_2816">
    <location>
        <begin position="23"/>
        <end position="328"/>
    </location>
</feature>
<feature type="coiled-coil region" evidence="1">
    <location>
        <begin position="80"/>
        <end position="109"/>
    </location>
</feature>
<feature type="coiled-coil region" evidence="1">
    <location>
        <begin position="141"/>
        <end position="209"/>
    </location>
</feature>
<evidence type="ECO:0000255" key="1">
    <source>
        <dbReference type="HAMAP-Rule" id="MF_01304"/>
    </source>
</evidence>
<accession>Q1CFT7</accession>
<accession>C4GWI6</accession>
<gene>
    <name type="ordered locus">YPN_2816</name>
    <name type="ORF">YP516_3184</name>
</gene>
<name>Y2816_YERPN</name>
<keyword id="KW-0175">Coiled coil</keyword>
<keyword id="KW-0574">Periplasm</keyword>
<keyword id="KW-0732">Signal</keyword>
<proteinExistence type="inferred from homology"/>
<protein>
    <recommendedName>
        <fullName evidence="1">UPF0194 membrane protein YPN_2816</fullName>
    </recommendedName>
</protein>
<comment type="subcellular location">
    <subcellularLocation>
        <location evidence="1">Periplasm</location>
    </subcellularLocation>
</comment>
<comment type="similarity">
    <text evidence="1">Belongs to the UPF0194 family.</text>
</comment>
<dbReference type="EMBL" id="CP000305">
    <property type="protein sequence ID" value="ABG19143.1"/>
    <property type="molecule type" value="Genomic_DNA"/>
</dbReference>
<dbReference type="EMBL" id="ACNQ01000017">
    <property type="protein sequence ID" value="EEO75286.1"/>
    <property type="molecule type" value="Genomic_DNA"/>
</dbReference>
<dbReference type="SMR" id="Q1CFT7"/>
<dbReference type="KEGG" id="ypn:YPN_2816"/>
<dbReference type="HOGENOM" id="CLU_018816_6_3_6"/>
<dbReference type="Proteomes" id="UP000008936">
    <property type="component" value="Chromosome"/>
</dbReference>
<dbReference type="GO" id="GO:0042597">
    <property type="term" value="C:periplasmic space"/>
    <property type="evidence" value="ECO:0007669"/>
    <property type="project" value="UniProtKB-SubCell"/>
</dbReference>
<dbReference type="Gene3D" id="2.40.30.170">
    <property type="match status" value="1"/>
</dbReference>
<dbReference type="Gene3D" id="2.40.50.100">
    <property type="match status" value="1"/>
</dbReference>
<dbReference type="Gene3D" id="1.10.287.470">
    <property type="entry name" value="Helix hairpin bin"/>
    <property type="match status" value="2"/>
</dbReference>
<dbReference type="HAMAP" id="MF_01304">
    <property type="entry name" value="UPF0194"/>
    <property type="match status" value="1"/>
</dbReference>
<dbReference type="InterPro" id="IPR032317">
    <property type="entry name" value="CusB_D23"/>
</dbReference>
<dbReference type="InterPro" id="IPR022936">
    <property type="entry name" value="UPF0194_membrane_YbhG"/>
</dbReference>
<dbReference type="InterPro" id="IPR050465">
    <property type="entry name" value="UPF0194_transport"/>
</dbReference>
<dbReference type="NCBIfam" id="NF002939">
    <property type="entry name" value="PRK03598.1"/>
    <property type="match status" value="1"/>
</dbReference>
<dbReference type="PANTHER" id="PTHR32347">
    <property type="entry name" value="EFFLUX SYSTEM COMPONENT YKNX-RELATED"/>
    <property type="match status" value="1"/>
</dbReference>
<dbReference type="PANTHER" id="PTHR32347:SF29">
    <property type="entry name" value="UPF0194 MEMBRANE PROTEIN YBHG"/>
    <property type="match status" value="1"/>
</dbReference>
<dbReference type="Pfam" id="PF16576">
    <property type="entry name" value="HlyD_D23"/>
    <property type="match status" value="1"/>
</dbReference>
<dbReference type="SUPFAM" id="SSF111369">
    <property type="entry name" value="HlyD-like secretion proteins"/>
    <property type="match status" value="2"/>
</dbReference>
<organism>
    <name type="scientific">Yersinia pestis bv. Antiqua (strain Nepal516)</name>
    <dbReference type="NCBI Taxonomy" id="377628"/>
    <lineage>
        <taxon>Bacteria</taxon>
        <taxon>Pseudomonadati</taxon>
        <taxon>Pseudomonadota</taxon>
        <taxon>Gammaproteobacteria</taxon>
        <taxon>Enterobacterales</taxon>
        <taxon>Yersiniaceae</taxon>
        <taxon>Yersinia</taxon>
    </lineage>
</organism>
<reference key="1">
    <citation type="journal article" date="2006" name="J. Bacteriol.">
        <title>Complete genome sequence of Yersinia pestis strains Antiqua and Nepal516: evidence of gene reduction in an emerging pathogen.</title>
        <authorList>
            <person name="Chain P.S.G."/>
            <person name="Hu P."/>
            <person name="Malfatti S.A."/>
            <person name="Radnedge L."/>
            <person name="Larimer F."/>
            <person name="Vergez L.M."/>
            <person name="Worsham P."/>
            <person name="Chu M.C."/>
            <person name="Andersen G.L."/>
        </authorList>
    </citation>
    <scope>NUCLEOTIDE SEQUENCE [LARGE SCALE GENOMIC DNA]</scope>
    <source>
        <strain>Nepal516</strain>
    </source>
</reference>
<reference key="2">
    <citation type="submission" date="2009-04" db="EMBL/GenBank/DDBJ databases">
        <title>Yersinia pestis Nepal516A whole genome shotgun sequencing project.</title>
        <authorList>
            <person name="Plunkett G. III"/>
            <person name="Anderson B.D."/>
            <person name="Baumler D.J."/>
            <person name="Burland V."/>
            <person name="Cabot E.L."/>
            <person name="Glasner J.D."/>
            <person name="Mau B."/>
            <person name="Neeno-Eckwall E."/>
            <person name="Perna N.T."/>
            <person name="Munk A.C."/>
            <person name="Tapia R."/>
            <person name="Green L.D."/>
            <person name="Rogers Y.C."/>
            <person name="Detter J.C."/>
            <person name="Bruce D.C."/>
            <person name="Brettin T.S."/>
        </authorList>
    </citation>
    <scope>NUCLEOTIDE SEQUENCE [LARGE SCALE GENOMIC DNA]</scope>
    <source>
        <strain>Nepal516</strain>
    </source>
</reference>